<proteinExistence type="inferred from homology"/>
<organism>
    <name type="scientific">Clostridium perfringens (strain SM101 / Type A)</name>
    <dbReference type="NCBI Taxonomy" id="289380"/>
    <lineage>
        <taxon>Bacteria</taxon>
        <taxon>Bacillati</taxon>
        <taxon>Bacillota</taxon>
        <taxon>Clostridia</taxon>
        <taxon>Eubacteriales</taxon>
        <taxon>Clostridiaceae</taxon>
        <taxon>Clostridium</taxon>
    </lineage>
</organism>
<dbReference type="EMBL" id="CP000312">
    <property type="protein sequence ID" value="ABG87390.1"/>
    <property type="molecule type" value="Genomic_DNA"/>
</dbReference>
<dbReference type="RefSeq" id="WP_003449706.1">
    <property type="nucleotide sequence ID" value="NZ_CAXVKH010000081.1"/>
</dbReference>
<dbReference type="KEGG" id="cpr:CPR_1590"/>
<dbReference type="BioCyc" id="CPER289380:GI76-1601-MONOMER"/>
<dbReference type="Proteomes" id="UP000001824">
    <property type="component" value="Chromosome"/>
</dbReference>
<dbReference type="HAMAP" id="MF_01448">
    <property type="entry name" value="UPF0473"/>
    <property type="match status" value="1"/>
</dbReference>
<dbReference type="InterPro" id="IPR009711">
    <property type="entry name" value="UPF0473"/>
</dbReference>
<dbReference type="NCBIfam" id="NF010218">
    <property type="entry name" value="PRK13678.2-1"/>
    <property type="match status" value="1"/>
</dbReference>
<dbReference type="Pfam" id="PF06949">
    <property type="entry name" value="DUF1292"/>
    <property type="match status" value="1"/>
</dbReference>
<accession>Q0SSK1</accession>
<sequence length="85" mass="10088">MEEKQIMAFRDEEGNKVEFEVVAKIYLGEKNKKEYIVLSPVEGNGDEADDFVFRVDKVNDSVEYNLVEDDEEFRLVKKEYKKLLY</sequence>
<reference key="1">
    <citation type="journal article" date="2006" name="Genome Res.">
        <title>Skewed genomic variability in strains of the toxigenic bacterial pathogen, Clostridium perfringens.</title>
        <authorList>
            <person name="Myers G.S.A."/>
            <person name="Rasko D.A."/>
            <person name="Cheung J.K."/>
            <person name="Ravel J."/>
            <person name="Seshadri R."/>
            <person name="DeBoy R.T."/>
            <person name="Ren Q."/>
            <person name="Varga J."/>
            <person name="Awad M.M."/>
            <person name="Brinkac L.M."/>
            <person name="Daugherty S.C."/>
            <person name="Haft D.H."/>
            <person name="Dodson R.J."/>
            <person name="Madupu R."/>
            <person name="Nelson W.C."/>
            <person name="Rosovitz M.J."/>
            <person name="Sullivan S.A."/>
            <person name="Khouri H."/>
            <person name="Dimitrov G.I."/>
            <person name="Watkins K.L."/>
            <person name="Mulligan S."/>
            <person name="Benton J."/>
            <person name="Radune D."/>
            <person name="Fisher D.J."/>
            <person name="Atkins H.S."/>
            <person name="Hiscox T."/>
            <person name="Jost B.H."/>
            <person name="Billington S.J."/>
            <person name="Songer J.G."/>
            <person name="McClane B.A."/>
            <person name="Titball R.W."/>
            <person name="Rood J.I."/>
            <person name="Melville S.B."/>
            <person name="Paulsen I.T."/>
        </authorList>
    </citation>
    <scope>NUCLEOTIDE SEQUENCE [LARGE SCALE GENOMIC DNA]</scope>
    <source>
        <strain>SM101 / Type A</strain>
    </source>
</reference>
<name>Y1590_CLOPS</name>
<protein>
    <recommendedName>
        <fullName evidence="1">UPF0473 protein CPR_1590</fullName>
    </recommendedName>
</protein>
<comment type="similarity">
    <text evidence="1">Belongs to the UPF0473 family.</text>
</comment>
<feature type="chain" id="PRO_0000304827" description="UPF0473 protein CPR_1590">
    <location>
        <begin position="1"/>
        <end position="85"/>
    </location>
</feature>
<gene>
    <name type="ordered locus">CPR_1590</name>
</gene>
<evidence type="ECO:0000255" key="1">
    <source>
        <dbReference type="HAMAP-Rule" id="MF_01448"/>
    </source>
</evidence>